<protein>
    <recommendedName>
        <fullName>Uncharacterized protein ORF54</fullName>
    </recommendedName>
</protein>
<keyword id="KW-1043">Host membrane</keyword>
<keyword id="KW-0472">Membrane</keyword>
<keyword id="KW-1185">Reference proteome</keyword>
<keyword id="KW-0812">Transmembrane</keyword>
<keyword id="KW-1133">Transmembrane helix</keyword>
<reference key="1">
    <citation type="journal article" date="2007" name="Virology">
        <title>Genome of the Acidianus bottle-shaped virus and insights into the replication and packaging mechanisms.</title>
        <authorList>
            <person name="Peng X."/>
            <person name="Basta T."/>
            <person name="Haring M."/>
            <person name="Garrett R.A."/>
            <person name="Prangishvili D."/>
        </authorList>
    </citation>
    <scope>NUCLEOTIDE SEQUENCE [GENOMIC DNA]</scope>
</reference>
<organismHost>
    <name type="scientific">Acidianus convivator</name>
    <dbReference type="NCBI Taxonomy" id="269667"/>
</organismHost>
<proteinExistence type="predicted"/>
<sequence>MNWKTILIYLLIFVAGIVIGKIRINVKMNKGSCPRDLIDKYKQQLNDSESSDYL</sequence>
<organism>
    <name type="scientific">Acidianus bottle-shaped virus (isolate Italy/Pozzuoli)</name>
    <name type="common">ABV</name>
    <dbReference type="NCBI Taxonomy" id="654911"/>
    <lineage>
        <taxon>Viruses</taxon>
        <taxon>Viruses incertae sedis</taxon>
        <taxon>Ampullaviridae</taxon>
        <taxon>Bottigliavirus</taxon>
        <taxon>Bottigliavirus ABV</taxon>
    </lineage>
</organism>
<comment type="subcellular location">
    <subcellularLocation>
        <location evidence="2">Host membrane</location>
        <topology evidence="2">Single-pass membrane protein</topology>
    </subcellularLocation>
</comment>
<feature type="chain" id="PRO_0000384825" description="Uncharacterized protein ORF54">
    <location>
        <begin position="1"/>
        <end position="54"/>
    </location>
</feature>
<feature type="transmembrane region" description="Helical" evidence="1">
    <location>
        <begin position="6"/>
        <end position="26"/>
    </location>
</feature>
<accession>A4ZUC6</accession>
<evidence type="ECO:0000255" key="1"/>
<evidence type="ECO:0000305" key="2"/>
<name>Y054_ABVP</name>
<dbReference type="EMBL" id="EF432053">
    <property type="protein sequence ID" value="ABP73430.1"/>
    <property type="molecule type" value="Genomic_DNA"/>
</dbReference>
<dbReference type="RefSeq" id="YP_001210344.1">
    <property type="nucleotide sequence ID" value="NC_009452.1"/>
</dbReference>
<dbReference type="SMR" id="A4ZUC6"/>
<dbReference type="GeneID" id="5129837"/>
<dbReference type="KEGG" id="vg:5129837"/>
<dbReference type="Proteomes" id="UP000000513">
    <property type="component" value="Segment"/>
</dbReference>
<dbReference type="GO" id="GO:0033644">
    <property type="term" value="C:host cell membrane"/>
    <property type="evidence" value="ECO:0007669"/>
    <property type="project" value="UniProtKB-SubCell"/>
</dbReference>
<dbReference type="GO" id="GO:0016020">
    <property type="term" value="C:membrane"/>
    <property type="evidence" value="ECO:0007669"/>
    <property type="project" value="UniProtKB-KW"/>
</dbReference>
<gene>
    <name type="ORF">ORF54</name>
</gene>